<evidence type="ECO:0000305" key="1"/>
<feature type="signal peptide">
    <location>
        <begin position="1"/>
        <end position="21"/>
    </location>
</feature>
<feature type="chain" id="PRO_0000005376" description="Chorion class CA protein ERA.1">
    <location>
        <begin position="22"/>
        <end position="119"/>
    </location>
</feature>
<feature type="region of interest" description="Left arm">
    <location>
        <begin position="22"/>
        <end position="55"/>
    </location>
</feature>
<feature type="region of interest" description="Central domain">
    <location>
        <begin position="56"/>
        <end position="103"/>
    </location>
</feature>
<feature type="region of interest" description="Right arm">
    <location>
        <begin position="104"/>
        <end position="119"/>
    </location>
</feature>
<protein>
    <recommendedName>
        <fullName>Chorion class CA protein ERA.1</fullName>
    </recommendedName>
</protein>
<accession>P13531</accession>
<comment type="function">
    <text>This protein is one of many from the eggshell of the silk moth.</text>
</comment>
<comment type="similarity">
    <text evidence="1">Belongs to the chorion protein family.</text>
</comment>
<reference key="1">
    <citation type="journal article" date="1988" name="Dev. Biol.">
        <title>Organization and expression of three genes from the silkmoth early chorion locus.</title>
        <authorList>
            <person name="Hibner B.L."/>
            <person name="Burke W.D."/>
            <person name="Lecanidou R."/>
            <person name="Rodakis G.C."/>
            <person name="Eickbush T.H."/>
        </authorList>
    </citation>
    <scope>NUCLEOTIDE SEQUENCE [GENOMIC DNA]</scope>
</reference>
<organism>
    <name type="scientific">Bombyx mori</name>
    <name type="common">Silk moth</name>
    <dbReference type="NCBI Taxonomy" id="7091"/>
    <lineage>
        <taxon>Eukaryota</taxon>
        <taxon>Metazoa</taxon>
        <taxon>Ecdysozoa</taxon>
        <taxon>Arthropoda</taxon>
        <taxon>Hexapoda</taxon>
        <taxon>Insecta</taxon>
        <taxon>Pterygota</taxon>
        <taxon>Neoptera</taxon>
        <taxon>Endopterygota</taxon>
        <taxon>Lepidoptera</taxon>
        <taxon>Glossata</taxon>
        <taxon>Ditrysia</taxon>
        <taxon>Bombycoidea</taxon>
        <taxon>Bombycidae</taxon>
        <taxon>Bombycinae</taxon>
        <taxon>Bombyx</taxon>
    </lineage>
</organism>
<keyword id="KW-1185">Reference proteome</keyword>
<keyword id="KW-0677">Repeat</keyword>
<keyword id="KW-0732">Signal</keyword>
<sequence length="119" mass="11145">MSTFAVLLLCVQACLIQNVYSQCLGRVGPGGPPLGPYGGPLGGPGYGPVGYGGCGGYGGSGIGNVAVAGELPVAGSTGVMGQVPVIGAVEFAGPACAVGSVSISGACGPTCGCGGSPYY</sequence>
<dbReference type="EMBL" id="M19076">
    <property type="protein sequence ID" value="AAA27831.1"/>
    <property type="molecule type" value="Genomic_DNA"/>
</dbReference>
<dbReference type="PIR" id="B45937">
    <property type="entry name" value="B45937"/>
</dbReference>
<dbReference type="RefSeq" id="NP_001112376.1">
    <property type="nucleotide sequence ID" value="NM_001118904.2"/>
</dbReference>
<dbReference type="STRING" id="7091.P13531"/>
<dbReference type="EnsemblMetazoa" id="NM_001118904.2">
    <property type="protein sequence ID" value="NP_001112376.1"/>
    <property type="gene ID" value="GeneID_100141507"/>
</dbReference>
<dbReference type="GeneID" id="100141507"/>
<dbReference type="KEGG" id="bmor:100141507"/>
<dbReference type="CTD" id="100141507"/>
<dbReference type="InParanoid" id="P13531"/>
<dbReference type="OrthoDB" id="660270at7088"/>
<dbReference type="Proteomes" id="UP000005204">
    <property type="component" value="Unassembled WGS sequence"/>
</dbReference>
<dbReference type="GO" id="GO:0042600">
    <property type="term" value="C:egg chorion"/>
    <property type="evidence" value="ECO:0007669"/>
    <property type="project" value="InterPro"/>
</dbReference>
<dbReference type="GO" id="GO:0005213">
    <property type="term" value="F:structural constituent of egg chorion"/>
    <property type="evidence" value="ECO:0007669"/>
    <property type="project" value="InterPro"/>
</dbReference>
<dbReference type="GO" id="GO:0007304">
    <property type="term" value="P:chorion-containing eggshell formation"/>
    <property type="evidence" value="ECO:0007669"/>
    <property type="project" value="InterPro"/>
</dbReference>
<dbReference type="InterPro" id="IPR002635">
    <property type="entry name" value="Chorion"/>
</dbReference>
<dbReference type="Pfam" id="PF01723">
    <property type="entry name" value="Chorion_1"/>
    <property type="match status" value="2"/>
</dbReference>
<proteinExistence type="inferred from homology"/>
<gene>
    <name type="primary">ERA.1</name>
</gene>
<name>CHCA1_BOMMO</name>